<reference key="1">
    <citation type="journal article" date="2008" name="J. Bacteriol.">
        <title>Insights into the environmental resistance gene pool from the genome sequence of the multidrug-resistant environmental isolate Escherichia coli SMS-3-5.</title>
        <authorList>
            <person name="Fricke W.F."/>
            <person name="Wright M.S."/>
            <person name="Lindell A.H."/>
            <person name="Harkins D.M."/>
            <person name="Baker-Austin C."/>
            <person name="Ravel J."/>
            <person name="Stepanauskas R."/>
        </authorList>
    </citation>
    <scope>NUCLEOTIDE SEQUENCE [LARGE SCALE GENOMIC DNA]</scope>
    <source>
        <strain>SMS-3-5 / SECEC</strain>
    </source>
</reference>
<evidence type="ECO:0000255" key="1">
    <source>
        <dbReference type="HAMAP-Rule" id="MF_00658"/>
    </source>
</evidence>
<comment type="function">
    <text evidence="1">Specifically methylates the pseudouridine at position 1915 (m3Psi1915) in 23S rRNA.</text>
</comment>
<comment type="catalytic activity">
    <reaction evidence="1">
        <text>pseudouridine(1915) in 23S rRNA + S-adenosyl-L-methionine = N(3)-methylpseudouridine(1915) in 23S rRNA + S-adenosyl-L-homocysteine + H(+)</text>
        <dbReference type="Rhea" id="RHEA:42752"/>
        <dbReference type="Rhea" id="RHEA-COMP:10221"/>
        <dbReference type="Rhea" id="RHEA-COMP:10222"/>
        <dbReference type="ChEBI" id="CHEBI:15378"/>
        <dbReference type="ChEBI" id="CHEBI:57856"/>
        <dbReference type="ChEBI" id="CHEBI:59789"/>
        <dbReference type="ChEBI" id="CHEBI:65314"/>
        <dbReference type="ChEBI" id="CHEBI:74486"/>
        <dbReference type="EC" id="2.1.1.177"/>
    </reaction>
</comment>
<comment type="subunit">
    <text evidence="1">Homodimer.</text>
</comment>
<comment type="subcellular location">
    <subcellularLocation>
        <location evidence="1">Cytoplasm</location>
    </subcellularLocation>
</comment>
<comment type="similarity">
    <text evidence="1">Belongs to the RNA methyltransferase RlmH family.</text>
</comment>
<proteinExistence type="inferred from homology"/>
<sequence>MKLQLVAVGTKMPDWVQTGFTEYLRRFPKDMPFELIEIPAGKRGKNADIKRILDKEGEQMLAAAGKNRIVTLDIPGKPWDTPQLAAELERWKLDGRDVSLLIGGPEGLSPACKAAAEQSWSLSALTLPHPLVRVLVAESLYRAWSITTNHPYHRE</sequence>
<accession>B1LL85</accession>
<dbReference type="EC" id="2.1.1.177" evidence="1"/>
<dbReference type="EMBL" id="CP000970">
    <property type="protein sequence ID" value="ACB17687.1"/>
    <property type="molecule type" value="Genomic_DNA"/>
</dbReference>
<dbReference type="RefSeq" id="WP_000776104.1">
    <property type="nucleotide sequence ID" value="NC_010498.1"/>
</dbReference>
<dbReference type="SMR" id="B1LL85"/>
<dbReference type="GeneID" id="93776846"/>
<dbReference type="KEGG" id="ecm:EcSMS35_0656"/>
<dbReference type="HOGENOM" id="CLU_100552_1_0_6"/>
<dbReference type="Proteomes" id="UP000007011">
    <property type="component" value="Chromosome"/>
</dbReference>
<dbReference type="GO" id="GO:0005737">
    <property type="term" value="C:cytoplasm"/>
    <property type="evidence" value="ECO:0007669"/>
    <property type="project" value="UniProtKB-SubCell"/>
</dbReference>
<dbReference type="GO" id="GO:0070038">
    <property type="term" value="F:rRNA (pseudouridine-N3-)-methyltransferase activity"/>
    <property type="evidence" value="ECO:0007669"/>
    <property type="project" value="UniProtKB-UniRule"/>
</dbReference>
<dbReference type="CDD" id="cd18081">
    <property type="entry name" value="RlmH-like"/>
    <property type="match status" value="1"/>
</dbReference>
<dbReference type="FunFam" id="3.40.1280.10:FF:000004">
    <property type="entry name" value="Ribosomal RNA large subunit methyltransferase H"/>
    <property type="match status" value="1"/>
</dbReference>
<dbReference type="Gene3D" id="3.40.1280.10">
    <property type="match status" value="1"/>
</dbReference>
<dbReference type="HAMAP" id="MF_00658">
    <property type="entry name" value="23SrRNA_methyltr_H"/>
    <property type="match status" value="1"/>
</dbReference>
<dbReference type="InterPro" id="IPR029028">
    <property type="entry name" value="Alpha/beta_knot_MTases"/>
</dbReference>
<dbReference type="InterPro" id="IPR003742">
    <property type="entry name" value="RlmH-like"/>
</dbReference>
<dbReference type="InterPro" id="IPR029026">
    <property type="entry name" value="tRNA_m1G_MTases_N"/>
</dbReference>
<dbReference type="NCBIfam" id="NF000984">
    <property type="entry name" value="PRK00103.1-1"/>
    <property type="match status" value="1"/>
</dbReference>
<dbReference type="NCBIfam" id="NF000986">
    <property type="entry name" value="PRK00103.1-4"/>
    <property type="match status" value="1"/>
</dbReference>
<dbReference type="NCBIfam" id="TIGR00246">
    <property type="entry name" value="tRNA_RlmH_YbeA"/>
    <property type="match status" value="1"/>
</dbReference>
<dbReference type="PANTHER" id="PTHR33603">
    <property type="entry name" value="METHYLTRANSFERASE"/>
    <property type="match status" value="1"/>
</dbReference>
<dbReference type="PANTHER" id="PTHR33603:SF1">
    <property type="entry name" value="RIBOSOMAL RNA LARGE SUBUNIT METHYLTRANSFERASE H"/>
    <property type="match status" value="1"/>
</dbReference>
<dbReference type="Pfam" id="PF02590">
    <property type="entry name" value="SPOUT_MTase"/>
    <property type="match status" value="1"/>
</dbReference>
<dbReference type="PIRSF" id="PIRSF004505">
    <property type="entry name" value="MT_bac"/>
    <property type="match status" value="1"/>
</dbReference>
<dbReference type="SUPFAM" id="SSF75217">
    <property type="entry name" value="alpha/beta knot"/>
    <property type="match status" value="1"/>
</dbReference>
<organism>
    <name type="scientific">Escherichia coli (strain SMS-3-5 / SECEC)</name>
    <dbReference type="NCBI Taxonomy" id="439855"/>
    <lineage>
        <taxon>Bacteria</taxon>
        <taxon>Pseudomonadati</taxon>
        <taxon>Pseudomonadota</taxon>
        <taxon>Gammaproteobacteria</taxon>
        <taxon>Enterobacterales</taxon>
        <taxon>Enterobacteriaceae</taxon>
        <taxon>Escherichia</taxon>
    </lineage>
</organism>
<protein>
    <recommendedName>
        <fullName evidence="1">Ribosomal RNA large subunit methyltransferase H</fullName>
        <ecNumber evidence="1">2.1.1.177</ecNumber>
    </recommendedName>
    <alternativeName>
        <fullName evidence="1">23S rRNA (pseudouridine1915-N3)-methyltransferase</fullName>
    </alternativeName>
    <alternativeName>
        <fullName evidence="1">23S rRNA m3Psi1915 methyltransferase</fullName>
    </alternativeName>
    <alternativeName>
        <fullName evidence="1">rRNA (pseudouridine-N3-)-methyltransferase RlmH</fullName>
    </alternativeName>
</protein>
<gene>
    <name evidence="1" type="primary">rlmH</name>
    <name type="ordered locus">EcSMS35_0656</name>
</gene>
<keyword id="KW-0963">Cytoplasm</keyword>
<keyword id="KW-0489">Methyltransferase</keyword>
<keyword id="KW-0698">rRNA processing</keyword>
<keyword id="KW-0949">S-adenosyl-L-methionine</keyword>
<keyword id="KW-0808">Transferase</keyword>
<feature type="chain" id="PRO_0000366594" description="Ribosomal RNA large subunit methyltransferase H">
    <location>
        <begin position="1"/>
        <end position="155"/>
    </location>
</feature>
<feature type="binding site" evidence="1">
    <location>
        <position position="72"/>
    </location>
    <ligand>
        <name>S-adenosyl-L-methionine</name>
        <dbReference type="ChEBI" id="CHEBI:59789"/>
    </ligand>
</feature>
<feature type="binding site" evidence="1">
    <location>
        <position position="103"/>
    </location>
    <ligand>
        <name>S-adenosyl-L-methionine</name>
        <dbReference type="ChEBI" id="CHEBI:59789"/>
    </ligand>
</feature>
<feature type="binding site" evidence="1">
    <location>
        <begin position="122"/>
        <end position="127"/>
    </location>
    <ligand>
        <name>S-adenosyl-L-methionine</name>
        <dbReference type="ChEBI" id="CHEBI:59789"/>
    </ligand>
</feature>
<name>RLMH_ECOSM</name>